<comment type="function">
    <text evidence="1">Catalyzes the formation of S-adenosylmethionine (AdoMet) from methionine and ATP. The overall synthetic reaction is composed of two sequential steps, AdoMet formation and the subsequent tripolyphosphate hydrolysis which occurs prior to release of AdoMet from the enzyme.</text>
</comment>
<comment type="catalytic activity">
    <reaction evidence="1">
        <text>L-methionine + ATP + H2O = S-adenosyl-L-methionine + phosphate + diphosphate</text>
        <dbReference type="Rhea" id="RHEA:21080"/>
        <dbReference type="ChEBI" id="CHEBI:15377"/>
        <dbReference type="ChEBI" id="CHEBI:30616"/>
        <dbReference type="ChEBI" id="CHEBI:33019"/>
        <dbReference type="ChEBI" id="CHEBI:43474"/>
        <dbReference type="ChEBI" id="CHEBI:57844"/>
        <dbReference type="ChEBI" id="CHEBI:59789"/>
        <dbReference type="EC" id="2.5.1.6"/>
    </reaction>
</comment>
<comment type="cofactor">
    <cofactor evidence="1">
        <name>Mg(2+)</name>
        <dbReference type="ChEBI" id="CHEBI:18420"/>
    </cofactor>
    <text evidence="1">Binds 2 divalent ions per subunit.</text>
</comment>
<comment type="cofactor">
    <cofactor evidence="1">
        <name>K(+)</name>
        <dbReference type="ChEBI" id="CHEBI:29103"/>
    </cofactor>
    <text evidence="1">Binds 1 potassium ion per subunit.</text>
</comment>
<comment type="pathway">
    <text evidence="1">Amino-acid biosynthesis; S-adenosyl-L-methionine biosynthesis; S-adenosyl-L-methionine from L-methionine: step 1/1.</text>
</comment>
<comment type="subunit">
    <text evidence="1">Homotetramer; dimer of dimers.</text>
</comment>
<comment type="subcellular location">
    <subcellularLocation>
        <location evidence="1">Cytoplasm</location>
    </subcellularLocation>
</comment>
<comment type="similarity">
    <text evidence="1">Belongs to the AdoMet synthase family.</text>
</comment>
<evidence type="ECO:0000255" key="1">
    <source>
        <dbReference type="HAMAP-Rule" id="MF_00086"/>
    </source>
</evidence>
<reference key="1">
    <citation type="journal article" date="2008" name="Genome Res.">
        <title>Comparative genome analysis of Salmonella enteritidis PT4 and Salmonella gallinarum 287/91 provides insights into evolutionary and host adaptation pathways.</title>
        <authorList>
            <person name="Thomson N.R."/>
            <person name="Clayton D.J."/>
            <person name="Windhorst D."/>
            <person name="Vernikos G."/>
            <person name="Davidson S."/>
            <person name="Churcher C."/>
            <person name="Quail M.A."/>
            <person name="Stevens M."/>
            <person name="Jones M.A."/>
            <person name="Watson M."/>
            <person name="Barron A."/>
            <person name="Layton A."/>
            <person name="Pickard D."/>
            <person name="Kingsley R.A."/>
            <person name="Bignell A."/>
            <person name="Clark L."/>
            <person name="Harris B."/>
            <person name="Ormond D."/>
            <person name="Abdellah Z."/>
            <person name="Brooks K."/>
            <person name="Cherevach I."/>
            <person name="Chillingworth T."/>
            <person name="Woodward J."/>
            <person name="Norberczak H."/>
            <person name="Lord A."/>
            <person name="Arrowsmith C."/>
            <person name="Jagels K."/>
            <person name="Moule S."/>
            <person name="Mungall K."/>
            <person name="Saunders M."/>
            <person name="Whitehead S."/>
            <person name="Chabalgoity J.A."/>
            <person name="Maskell D."/>
            <person name="Humphreys T."/>
            <person name="Roberts M."/>
            <person name="Barrow P.A."/>
            <person name="Dougan G."/>
            <person name="Parkhill J."/>
        </authorList>
    </citation>
    <scope>NUCLEOTIDE SEQUENCE [LARGE SCALE GENOMIC DNA]</scope>
    <source>
        <strain>287/91 / NCTC 13346</strain>
    </source>
</reference>
<keyword id="KW-0067">ATP-binding</keyword>
<keyword id="KW-0963">Cytoplasm</keyword>
<keyword id="KW-0460">Magnesium</keyword>
<keyword id="KW-0479">Metal-binding</keyword>
<keyword id="KW-0547">Nucleotide-binding</keyword>
<keyword id="KW-0554">One-carbon metabolism</keyword>
<keyword id="KW-0630">Potassium</keyword>
<keyword id="KW-0808">Transferase</keyword>
<sequence>MAKHLFTSESVSEGHPDKIADQISDAVLDAILQQDPKARVACETYVKTGMVLVGGEITTSAWVDIEEITRNTVREIGYVHSDMGFDANSCAVLSAIGKQSPDINQGVDRSDLLEQGAGDQGLMFGYATNETDVLMPAPITYAHRLVQRQAEVRKNGTLPWLRPDAKSQVTFQYDDGKIVGIDAVVLSTQHAEDIDQKSLQEAVMEEIIKPILPSEWLNTSTKFFINPTGRFVIGGPMGDCGLTGRKIIVDTYGGMARHGGGAFSGKDPSKVDRSAAYAARYVAKNIVAAGLADRCEIQVSYAIGVAEPTSIMVETFGTEKVPAEQLILLVREFFDLRPYGLIQMLDLLHPIYKETAAYGHFGRENFPWEKTDKAQLLRDAAGLK</sequence>
<dbReference type="EC" id="2.5.1.6" evidence="1"/>
<dbReference type="EMBL" id="AM933173">
    <property type="protein sequence ID" value="CAR38789.1"/>
    <property type="molecule type" value="Genomic_DNA"/>
</dbReference>
<dbReference type="RefSeq" id="WP_001062144.1">
    <property type="nucleotide sequence ID" value="NC_011274.1"/>
</dbReference>
<dbReference type="SMR" id="B5RE50"/>
<dbReference type="KEGG" id="seg:SG2984"/>
<dbReference type="HOGENOM" id="CLU_041802_1_1_6"/>
<dbReference type="UniPathway" id="UPA00315">
    <property type="reaction ID" value="UER00080"/>
</dbReference>
<dbReference type="Proteomes" id="UP000008321">
    <property type="component" value="Chromosome"/>
</dbReference>
<dbReference type="GO" id="GO:0005737">
    <property type="term" value="C:cytoplasm"/>
    <property type="evidence" value="ECO:0007669"/>
    <property type="project" value="UniProtKB-SubCell"/>
</dbReference>
<dbReference type="GO" id="GO:0005524">
    <property type="term" value="F:ATP binding"/>
    <property type="evidence" value="ECO:0007669"/>
    <property type="project" value="UniProtKB-UniRule"/>
</dbReference>
<dbReference type="GO" id="GO:0000287">
    <property type="term" value="F:magnesium ion binding"/>
    <property type="evidence" value="ECO:0007669"/>
    <property type="project" value="UniProtKB-UniRule"/>
</dbReference>
<dbReference type="GO" id="GO:0004478">
    <property type="term" value="F:methionine adenosyltransferase activity"/>
    <property type="evidence" value="ECO:0007669"/>
    <property type="project" value="UniProtKB-UniRule"/>
</dbReference>
<dbReference type="GO" id="GO:0006730">
    <property type="term" value="P:one-carbon metabolic process"/>
    <property type="evidence" value="ECO:0007669"/>
    <property type="project" value="UniProtKB-KW"/>
</dbReference>
<dbReference type="GO" id="GO:0006556">
    <property type="term" value="P:S-adenosylmethionine biosynthetic process"/>
    <property type="evidence" value="ECO:0007669"/>
    <property type="project" value="UniProtKB-UniRule"/>
</dbReference>
<dbReference type="CDD" id="cd18079">
    <property type="entry name" value="S-AdoMet_synt"/>
    <property type="match status" value="1"/>
</dbReference>
<dbReference type="FunFam" id="3.30.300.10:FF:000001">
    <property type="entry name" value="S-adenosylmethionine synthase"/>
    <property type="match status" value="1"/>
</dbReference>
<dbReference type="FunFam" id="3.30.300.10:FF:000003">
    <property type="entry name" value="S-adenosylmethionine synthase"/>
    <property type="match status" value="1"/>
</dbReference>
<dbReference type="Gene3D" id="3.30.300.10">
    <property type="match status" value="3"/>
</dbReference>
<dbReference type="HAMAP" id="MF_00086">
    <property type="entry name" value="S_AdoMet_synth1"/>
    <property type="match status" value="1"/>
</dbReference>
<dbReference type="InterPro" id="IPR022631">
    <property type="entry name" value="ADOMET_SYNTHASE_CS"/>
</dbReference>
<dbReference type="InterPro" id="IPR022630">
    <property type="entry name" value="S-AdoMet_synt_C"/>
</dbReference>
<dbReference type="InterPro" id="IPR022629">
    <property type="entry name" value="S-AdoMet_synt_central"/>
</dbReference>
<dbReference type="InterPro" id="IPR022628">
    <property type="entry name" value="S-AdoMet_synt_N"/>
</dbReference>
<dbReference type="InterPro" id="IPR002133">
    <property type="entry name" value="S-AdoMet_synthetase"/>
</dbReference>
<dbReference type="InterPro" id="IPR022636">
    <property type="entry name" value="S-AdoMet_synthetase_sfam"/>
</dbReference>
<dbReference type="NCBIfam" id="TIGR01034">
    <property type="entry name" value="metK"/>
    <property type="match status" value="1"/>
</dbReference>
<dbReference type="PANTHER" id="PTHR11964">
    <property type="entry name" value="S-ADENOSYLMETHIONINE SYNTHETASE"/>
    <property type="match status" value="1"/>
</dbReference>
<dbReference type="Pfam" id="PF02773">
    <property type="entry name" value="S-AdoMet_synt_C"/>
    <property type="match status" value="1"/>
</dbReference>
<dbReference type="Pfam" id="PF02772">
    <property type="entry name" value="S-AdoMet_synt_M"/>
    <property type="match status" value="1"/>
</dbReference>
<dbReference type="Pfam" id="PF00438">
    <property type="entry name" value="S-AdoMet_synt_N"/>
    <property type="match status" value="1"/>
</dbReference>
<dbReference type="PIRSF" id="PIRSF000497">
    <property type="entry name" value="MAT"/>
    <property type="match status" value="1"/>
</dbReference>
<dbReference type="SUPFAM" id="SSF55973">
    <property type="entry name" value="S-adenosylmethionine synthetase"/>
    <property type="match status" value="3"/>
</dbReference>
<dbReference type="PROSITE" id="PS00376">
    <property type="entry name" value="ADOMET_SYNTHASE_1"/>
    <property type="match status" value="1"/>
</dbReference>
<dbReference type="PROSITE" id="PS00377">
    <property type="entry name" value="ADOMET_SYNTHASE_2"/>
    <property type="match status" value="1"/>
</dbReference>
<protein>
    <recommendedName>
        <fullName evidence="1">S-adenosylmethionine synthase</fullName>
        <shortName evidence="1">AdoMet synthase</shortName>
        <ecNumber evidence="1">2.5.1.6</ecNumber>
    </recommendedName>
    <alternativeName>
        <fullName evidence="1">MAT</fullName>
    </alternativeName>
    <alternativeName>
        <fullName evidence="1">Methionine adenosyltransferase</fullName>
    </alternativeName>
</protein>
<organism>
    <name type="scientific">Salmonella gallinarum (strain 287/91 / NCTC 13346)</name>
    <dbReference type="NCBI Taxonomy" id="550538"/>
    <lineage>
        <taxon>Bacteria</taxon>
        <taxon>Pseudomonadati</taxon>
        <taxon>Pseudomonadota</taxon>
        <taxon>Gammaproteobacteria</taxon>
        <taxon>Enterobacterales</taxon>
        <taxon>Enterobacteriaceae</taxon>
        <taxon>Salmonella</taxon>
    </lineage>
</organism>
<feature type="chain" id="PRO_1000093080" description="S-adenosylmethionine synthase">
    <location>
        <begin position="1"/>
        <end position="384"/>
    </location>
</feature>
<feature type="region of interest" description="Flexible loop" evidence="1">
    <location>
        <begin position="99"/>
        <end position="109"/>
    </location>
</feature>
<feature type="binding site" description="in other chain" evidence="1">
    <location>
        <position position="15"/>
    </location>
    <ligand>
        <name>ATP</name>
        <dbReference type="ChEBI" id="CHEBI:30616"/>
        <note>ligand shared between two neighboring subunits</note>
    </ligand>
</feature>
<feature type="binding site" evidence="1">
    <location>
        <position position="17"/>
    </location>
    <ligand>
        <name>Mg(2+)</name>
        <dbReference type="ChEBI" id="CHEBI:18420"/>
    </ligand>
</feature>
<feature type="binding site" evidence="1">
    <location>
        <position position="43"/>
    </location>
    <ligand>
        <name>K(+)</name>
        <dbReference type="ChEBI" id="CHEBI:29103"/>
    </ligand>
</feature>
<feature type="binding site" description="in other chain" evidence="1">
    <location>
        <position position="56"/>
    </location>
    <ligand>
        <name>L-methionine</name>
        <dbReference type="ChEBI" id="CHEBI:57844"/>
        <note>ligand shared between two neighboring subunits</note>
    </ligand>
</feature>
<feature type="binding site" description="in other chain" evidence="1">
    <location>
        <position position="99"/>
    </location>
    <ligand>
        <name>L-methionine</name>
        <dbReference type="ChEBI" id="CHEBI:57844"/>
        <note>ligand shared between two neighboring subunits</note>
    </ligand>
</feature>
<feature type="binding site" description="in other chain" evidence="1">
    <location>
        <begin position="164"/>
        <end position="166"/>
    </location>
    <ligand>
        <name>ATP</name>
        <dbReference type="ChEBI" id="CHEBI:30616"/>
        <note>ligand shared between two neighboring subunits</note>
    </ligand>
</feature>
<feature type="binding site" description="in other chain" evidence="1">
    <location>
        <begin position="230"/>
        <end position="231"/>
    </location>
    <ligand>
        <name>ATP</name>
        <dbReference type="ChEBI" id="CHEBI:30616"/>
        <note>ligand shared between two neighboring subunits</note>
    </ligand>
</feature>
<feature type="binding site" evidence="1">
    <location>
        <position position="239"/>
    </location>
    <ligand>
        <name>ATP</name>
        <dbReference type="ChEBI" id="CHEBI:30616"/>
        <note>ligand shared between two neighboring subunits</note>
    </ligand>
</feature>
<feature type="binding site" evidence="1">
    <location>
        <position position="239"/>
    </location>
    <ligand>
        <name>L-methionine</name>
        <dbReference type="ChEBI" id="CHEBI:57844"/>
        <note>ligand shared between two neighboring subunits</note>
    </ligand>
</feature>
<feature type="binding site" description="in other chain" evidence="1">
    <location>
        <begin position="245"/>
        <end position="246"/>
    </location>
    <ligand>
        <name>ATP</name>
        <dbReference type="ChEBI" id="CHEBI:30616"/>
        <note>ligand shared between two neighboring subunits</note>
    </ligand>
</feature>
<feature type="binding site" evidence="1">
    <location>
        <position position="262"/>
    </location>
    <ligand>
        <name>ATP</name>
        <dbReference type="ChEBI" id="CHEBI:30616"/>
        <note>ligand shared between two neighboring subunits</note>
    </ligand>
</feature>
<feature type="binding site" evidence="1">
    <location>
        <position position="266"/>
    </location>
    <ligand>
        <name>ATP</name>
        <dbReference type="ChEBI" id="CHEBI:30616"/>
        <note>ligand shared between two neighboring subunits</note>
    </ligand>
</feature>
<feature type="binding site" description="in other chain" evidence="1">
    <location>
        <position position="270"/>
    </location>
    <ligand>
        <name>L-methionine</name>
        <dbReference type="ChEBI" id="CHEBI:57844"/>
        <note>ligand shared between two neighboring subunits</note>
    </ligand>
</feature>
<accession>B5RE50</accession>
<name>METK_SALG2</name>
<gene>
    <name evidence="1" type="primary">metK</name>
    <name type="ordered locus">SG2984</name>
</gene>
<proteinExistence type="inferred from homology"/>